<dbReference type="EC" id="6.6.1.1"/>
<dbReference type="EMBL" id="AC006932">
    <property type="protein sequence ID" value="AAF22895.1"/>
    <property type="status" value="ALT_SEQ"/>
    <property type="molecule type" value="Genomic_DNA"/>
</dbReference>
<dbReference type="EMBL" id="CP002684">
    <property type="protein sequence ID" value="AEE28301.1"/>
    <property type="molecule type" value="Genomic_DNA"/>
</dbReference>
<dbReference type="EMBL" id="AY063821">
    <property type="protein sequence ID" value="AAL36177.1"/>
    <property type="molecule type" value="mRNA"/>
</dbReference>
<dbReference type="EMBL" id="AY091402">
    <property type="protein sequence ID" value="AAM14341.1"/>
    <property type="molecule type" value="mRNA"/>
</dbReference>
<dbReference type="EMBL" id="AK226535">
    <property type="protein sequence ID" value="BAE98674.1"/>
    <property type="molecule type" value="mRNA"/>
</dbReference>
<dbReference type="EMBL" id="AK316801">
    <property type="protein sequence ID" value="BAH19517.1"/>
    <property type="molecule type" value="mRNA"/>
</dbReference>
<dbReference type="EMBL" id="AF083555">
    <property type="protein sequence ID" value="AAD52031.1"/>
    <property type="molecule type" value="mRNA"/>
</dbReference>
<dbReference type="EMBL" id="BT002406">
    <property type="protein sequence ID" value="AAO00766.1"/>
    <property type="status" value="ALT_INIT"/>
    <property type="molecule type" value="mRNA"/>
</dbReference>
<dbReference type="EMBL" id="AY059906">
    <property type="protein sequence ID" value="AAL24388.1"/>
    <property type="molecule type" value="mRNA"/>
</dbReference>
<dbReference type="EMBL" id="AY114693">
    <property type="protein sequence ID" value="AAM48012.1"/>
    <property type="molecule type" value="mRNA"/>
</dbReference>
<dbReference type="PIR" id="B86218">
    <property type="entry name" value="B86218"/>
</dbReference>
<dbReference type="RefSeq" id="NP_563821.2">
    <property type="nucleotide sequence ID" value="NM_100725.4"/>
</dbReference>
<dbReference type="SMR" id="Q9SJE1"/>
<dbReference type="BioGRID" id="22615">
    <property type="interactions" value="1"/>
</dbReference>
<dbReference type="FunCoup" id="Q9SJE1">
    <property type="interactions" value="992"/>
</dbReference>
<dbReference type="STRING" id="3702.Q9SJE1"/>
<dbReference type="PaxDb" id="3702-AT1G08520.1"/>
<dbReference type="ProteomicsDB" id="246996"/>
<dbReference type="EnsemblPlants" id="AT1G08520.1">
    <property type="protein sequence ID" value="AT1G08520.1"/>
    <property type="gene ID" value="AT1G08520"/>
</dbReference>
<dbReference type="GeneID" id="837374"/>
<dbReference type="Gramene" id="AT1G08520.1">
    <property type="protein sequence ID" value="AT1G08520.1"/>
    <property type="gene ID" value="AT1G08520"/>
</dbReference>
<dbReference type="KEGG" id="ath:AT1G08520"/>
<dbReference type="Araport" id="AT1G08520"/>
<dbReference type="TAIR" id="AT1G08520">
    <property type="gene designation" value="ALB1"/>
</dbReference>
<dbReference type="eggNOG" id="ENOG502QU3C">
    <property type="taxonomic scope" value="Eukaryota"/>
</dbReference>
<dbReference type="HOGENOM" id="CLU_016684_6_2_1"/>
<dbReference type="InParanoid" id="Q9SJE1"/>
<dbReference type="OMA" id="YYHLPKA"/>
<dbReference type="PhylomeDB" id="Q9SJE1"/>
<dbReference type="BioCyc" id="ARA:AT1G08520-MONOMER"/>
<dbReference type="BioCyc" id="MetaCyc:AT1G08520-MONOMER"/>
<dbReference type="UniPathway" id="UPA00668"/>
<dbReference type="PRO" id="PR:Q9SJE1"/>
<dbReference type="Proteomes" id="UP000006548">
    <property type="component" value="Chromosome 1"/>
</dbReference>
<dbReference type="ExpressionAtlas" id="Q9SJE1">
    <property type="expression patterns" value="baseline and differential"/>
</dbReference>
<dbReference type="GO" id="GO:0009507">
    <property type="term" value="C:chloroplast"/>
    <property type="evidence" value="ECO:0007005"/>
    <property type="project" value="TAIR"/>
</dbReference>
<dbReference type="GO" id="GO:0009570">
    <property type="term" value="C:chloroplast stroma"/>
    <property type="evidence" value="ECO:0007005"/>
    <property type="project" value="TAIR"/>
</dbReference>
<dbReference type="GO" id="GO:0009534">
    <property type="term" value="C:chloroplast thylakoid"/>
    <property type="evidence" value="ECO:0007005"/>
    <property type="project" value="TAIR"/>
</dbReference>
<dbReference type="GO" id="GO:0005576">
    <property type="term" value="C:extracellular region"/>
    <property type="evidence" value="ECO:0007005"/>
    <property type="project" value="TAIR"/>
</dbReference>
<dbReference type="GO" id="GO:0010007">
    <property type="term" value="C:magnesium chelatase complex"/>
    <property type="evidence" value="ECO:0000304"/>
    <property type="project" value="TAIR"/>
</dbReference>
<dbReference type="GO" id="GO:0005524">
    <property type="term" value="F:ATP binding"/>
    <property type="evidence" value="ECO:0007669"/>
    <property type="project" value="UniProtKB-KW"/>
</dbReference>
<dbReference type="GO" id="GO:0016887">
    <property type="term" value="F:ATP hydrolysis activity"/>
    <property type="evidence" value="ECO:0007669"/>
    <property type="project" value="InterPro"/>
</dbReference>
<dbReference type="GO" id="GO:0016851">
    <property type="term" value="F:magnesium chelatase activity"/>
    <property type="evidence" value="ECO:0007669"/>
    <property type="project" value="UniProtKB-EC"/>
</dbReference>
<dbReference type="GO" id="GO:0015995">
    <property type="term" value="P:chlorophyll biosynthetic process"/>
    <property type="evidence" value="ECO:0007669"/>
    <property type="project" value="UniProtKB-UniPathway"/>
</dbReference>
<dbReference type="GO" id="GO:0015979">
    <property type="term" value="P:photosynthesis"/>
    <property type="evidence" value="ECO:0007669"/>
    <property type="project" value="UniProtKB-KW"/>
</dbReference>
<dbReference type="CDD" id="cd01451">
    <property type="entry name" value="vWA_Magnesium_chelatase"/>
    <property type="match status" value="1"/>
</dbReference>
<dbReference type="FunFam" id="3.40.50.410:FF:000079">
    <property type="entry name" value="Mg-protoporphyrin IX chelatase"/>
    <property type="match status" value="1"/>
</dbReference>
<dbReference type="Gene3D" id="1.10.8.80">
    <property type="entry name" value="Magnesium chelatase subunit I, C-Terminal domain"/>
    <property type="match status" value="1"/>
</dbReference>
<dbReference type="Gene3D" id="3.40.50.300">
    <property type="entry name" value="P-loop containing nucleotide triphosphate hydrolases"/>
    <property type="match status" value="1"/>
</dbReference>
<dbReference type="Gene3D" id="3.40.50.410">
    <property type="entry name" value="von Willebrand factor, type A domain"/>
    <property type="match status" value="1"/>
</dbReference>
<dbReference type="InterPro" id="IPR003593">
    <property type="entry name" value="AAA+_ATPase"/>
</dbReference>
<dbReference type="InterPro" id="IPR041702">
    <property type="entry name" value="BchD/ChlD_VWA"/>
</dbReference>
<dbReference type="InterPro" id="IPR041628">
    <property type="entry name" value="ChlI/MoxR_AAA_lid"/>
</dbReference>
<dbReference type="InterPro" id="IPR011776">
    <property type="entry name" value="Mg_chelatase_ATPase-dsu"/>
</dbReference>
<dbReference type="InterPro" id="IPR000523">
    <property type="entry name" value="Mg_chelatse_chII-like_cat_dom"/>
</dbReference>
<dbReference type="InterPro" id="IPR027417">
    <property type="entry name" value="P-loop_NTPase"/>
</dbReference>
<dbReference type="InterPro" id="IPR002035">
    <property type="entry name" value="VWF_A"/>
</dbReference>
<dbReference type="InterPro" id="IPR036465">
    <property type="entry name" value="vWFA_dom_sf"/>
</dbReference>
<dbReference type="NCBIfam" id="TIGR02031">
    <property type="entry name" value="BchD-ChlD"/>
    <property type="match status" value="1"/>
</dbReference>
<dbReference type="PANTHER" id="PTHR43473">
    <property type="entry name" value="MAGNESIUM-CHELATASE SUBUNIT CHLD, CHLOROPLASTIC"/>
    <property type="match status" value="1"/>
</dbReference>
<dbReference type="PANTHER" id="PTHR43473:SF2">
    <property type="entry name" value="MAGNESIUM-CHELATASE SUBUNIT CHLD, CHLOROPLASTIC"/>
    <property type="match status" value="1"/>
</dbReference>
<dbReference type="Pfam" id="PF17863">
    <property type="entry name" value="AAA_lid_2"/>
    <property type="match status" value="1"/>
</dbReference>
<dbReference type="Pfam" id="PF01078">
    <property type="entry name" value="Mg_chelatase"/>
    <property type="match status" value="1"/>
</dbReference>
<dbReference type="Pfam" id="PF13519">
    <property type="entry name" value="VWA_2"/>
    <property type="match status" value="1"/>
</dbReference>
<dbReference type="SMART" id="SM00382">
    <property type="entry name" value="AAA"/>
    <property type="match status" value="1"/>
</dbReference>
<dbReference type="SMART" id="SM00327">
    <property type="entry name" value="VWA"/>
    <property type="match status" value="1"/>
</dbReference>
<dbReference type="SUPFAM" id="SSF52540">
    <property type="entry name" value="P-loop containing nucleoside triphosphate hydrolases"/>
    <property type="match status" value="1"/>
</dbReference>
<dbReference type="SUPFAM" id="SSF53300">
    <property type="entry name" value="vWA-like"/>
    <property type="match status" value="1"/>
</dbReference>
<dbReference type="PROSITE" id="PS50234">
    <property type="entry name" value="VWFA"/>
    <property type="match status" value="1"/>
</dbReference>
<feature type="transit peptide" description="Chloroplast" evidence="1">
    <location>
        <begin position="1"/>
        <end position="49"/>
    </location>
</feature>
<feature type="chain" id="PRO_0000002798" description="Magnesium-chelatase subunit ChlD, chloroplastic">
    <location>
        <begin position="50"/>
        <end position="760"/>
    </location>
</feature>
<feature type="domain" description="VWFA" evidence="2">
    <location>
        <begin position="558"/>
        <end position="754"/>
    </location>
</feature>
<feature type="region of interest" description="Disordered" evidence="3">
    <location>
        <begin position="56"/>
        <end position="76"/>
    </location>
</feature>
<feature type="region of interest" description="Disordered" evidence="3">
    <location>
        <begin position="397"/>
        <end position="453"/>
    </location>
</feature>
<feature type="compositionally biased region" description="Pro residues" evidence="3">
    <location>
        <begin position="410"/>
        <end position="419"/>
    </location>
</feature>
<feature type="compositionally biased region" description="Acidic residues" evidence="3">
    <location>
        <begin position="423"/>
        <end position="453"/>
    </location>
</feature>
<feature type="sequence conflict" description="In Ref. 6; AAD52031." evidence="7" ref="6">
    <original>D</original>
    <variation>E</variation>
    <location>
        <position position="70"/>
    </location>
</feature>
<feature type="sequence conflict" description="In Ref. 6; AAD52031." evidence="7" ref="6">
    <original>D</original>
    <variation>N</variation>
    <location>
        <position position="150"/>
    </location>
</feature>
<feature type="sequence conflict" description="In Ref. 6; AAD52031." evidence="7" ref="6">
    <original>G</original>
    <variation>S</variation>
    <location>
        <position position="270"/>
    </location>
</feature>
<feature type="sequence conflict" description="In Ref. 6; AAD52031." evidence="7" ref="6">
    <location>
        <begin position="285"/>
        <end position="286"/>
    </location>
</feature>
<feature type="sequence conflict" description="In Ref. 6; AAD52031." evidence="7" ref="6">
    <original>R</original>
    <variation>S</variation>
    <location>
        <position position="314"/>
    </location>
</feature>
<feature type="sequence conflict" description="In Ref. 6; AAD52031." evidence="7" ref="6">
    <original>E</original>
    <variation>K</variation>
    <location>
        <position position="379"/>
    </location>
</feature>
<feature type="sequence conflict" description="In Ref. 6; AAD52031." evidence="7" ref="6">
    <original>E</original>
    <variation>D</variation>
    <location>
        <position position="426"/>
    </location>
</feature>
<feature type="sequence conflict" description="In Ref. 6; AAD52031." evidence="7" ref="6">
    <location>
        <position position="433"/>
    </location>
</feature>
<reference key="1">
    <citation type="journal article" date="2000" name="Nature">
        <title>Sequence and analysis of chromosome 1 of the plant Arabidopsis thaliana.</title>
        <authorList>
            <person name="Theologis A."/>
            <person name="Ecker J.R."/>
            <person name="Palm C.J."/>
            <person name="Federspiel N.A."/>
            <person name="Kaul S."/>
            <person name="White O."/>
            <person name="Alonso J."/>
            <person name="Altafi H."/>
            <person name="Araujo R."/>
            <person name="Bowman C.L."/>
            <person name="Brooks S.Y."/>
            <person name="Buehler E."/>
            <person name="Chan A."/>
            <person name="Chao Q."/>
            <person name="Chen H."/>
            <person name="Cheuk R.F."/>
            <person name="Chin C.W."/>
            <person name="Chung M.K."/>
            <person name="Conn L."/>
            <person name="Conway A.B."/>
            <person name="Conway A.R."/>
            <person name="Creasy T.H."/>
            <person name="Dewar K."/>
            <person name="Dunn P."/>
            <person name="Etgu P."/>
            <person name="Feldblyum T.V."/>
            <person name="Feng J.-D."/>
            <person name="Fong B."/>
            <person name="Fujii C.Y."/>
            <person name="Gill J.E."/>
            <person name="Goldsmith A.D."/>
            <person name="Haas B."/>
            <person name="Hansen N.F."/>
            <person name="Hughes B."/>
            <person name="Huizar L."/>
            <person name="Hunter J.L."/>
            <person name="Jenkins J."/>
            <person name="Johnson-Hopson C."/>
            <person name="Khan S."/>
            <person name="Khaykin E."/>
            <person name="Kim C.J."/>
            <person name="Koo H.L."/>
            <person name="Kremenetskaia I."/>
            <person name="Kurtz D.B."/>
            <person name="Kwan A."/>
            <person name="Lam B."/>
            <person name="Langin-Hooper S."/>
            <person name="Lee A."/>
            <person name="Lee J.M."/>
            <person name="Lenz C.A."/>
            <person name="Li J.H."/>
            <person name="Li Y.-P."/>
            <person name="Lin X."/>
            <person name="Liu S.X."/>
            <person name="Liu Z.A."/>
            <person name="Luros J.S."/>
            <person name="Maiti R."/>
            <person name="Marziali A."/>
            <person name="Militscher J."/>
            <person name="Miranda M."/>
            <person name="Nguyen M."/>
            <person name="Nierman W.C."/>
            <person name="Osborne B.I."/>
            <person name="Pai G."/>
            <person name="Peterson J."/>
            <person name="Pham P.K."/>
            <person name="Rizzo M."/>
            <person name="Rooney T."/>
            <person name="Rowley D."/>
            <person name="Sakano H."/>
            <person name="Salzberg S.L."/>
            <person name="Schwartz J.R."/>
            <person name="Shinn P."/>
            <person name="Southwick A.M."/>
            <person name="Sun H."/>
            <person name="Tallon L.J."/>
            <person name="Tambunga G."/>
            <person name="Toriumi M.J."/>
            <person name="Town C.D."/>
            <person name="Utterback T."/>
            <person name="Van Aken S."/>
            <person name="Vaysberg M."/>
            <person name="Vysotskaia V.S."/>
            <person name="Walker M."/>
            <person name="Wu D."/>
            <person name="Yu G."/>
            <person name="Fraser C.M."/>
            <person name="Venter J.C."/>
            <person name="Davis R.W."/>
        </authorList>
    </citation>
    <scope>NUCLEOTIDE SEQUENCE [LARGE SCALE GENOMIC DNA]</scope>
    <source>
        <strain>cv. Columbia</strain>
    </source>
</reference>
<reference key="2">
    <citation type="journal article" date="2017" name="Plant J.">
        <title>Araport11: a complete reannotation of the Arabidopsis thaliana reference genome.</title>
        <authorList>
            <person name="Cheng C.Y."/>
            <person name="Krishnakumar V."/>
            <person name="Chan A.P."/>
            <person name="Thibaud-Nissen F."/>
            <person name="Schobel S."/>
            <person name="Town C.D."/>
        </authorList>
    </citation>
    <scope>GENOME REANNOTATION</scope>
    <source>
        <strain>cv. Columbia</strain>
    </source>
</reference>
<reference key="3">
    <citation type="journal article" date="2003" name="Science">
        <title>Empirical analysis of transcriptional activity in the Arabidopsis genome.</title>
        <authorList>
            <person name="Yamada K."/>
            <person name="Lim J."/>
            <person name="Dale J.M."/>
            <person name="Chen H."/>
            <person name="Shinn P."/>
            <person name="Palm C.J."/>
            <person name="Southwick A.M."/>
            <person name="Wu H.C."/>
            <person name="Kim C.J."/>
            <person name="Nguyen M."/>
            <person name="Pham P.K."/>
            <person name="Cheuk R.F."/>
            <person name="Karlin-Newmann G."/>
            <person name="Liu S.X."/>
            <person name="Lam B."/>
            <person name="Sakano H."/>
            <person name="Wu T."/>
            <person name="Yu G."/>
            <person name="Miranda M."/>
            <person name="Quach H.L."/>
            <person name="Tripp M."/>
            <person name="Chang C.H."/>
            <person name="Lee J.M."/>
            <person name="Toriumi M.J."/>
            <person name="Chan M.M."/>
            <person name="Tang C.C."/>
            <person name="Onodera C.S."/>
            <person name="Deng J.M."/>
            <person name="Akiyama K."/>
            <person name="Ansari Y."/>
            <person name="Arakawa T."/>
            <person name="Banh J."/>
            <person name="Banno F."/>
            <person name="Bowser L."/>
            <person name="Brooks S.Y."/>
            <person name="Carninci P."/>
            <person name="Chao Q."/>
            <person name="Choy N."/>
            <person name="Enju A."/>
            <person name="Goldsmith A.D."/>
            <person name="Gurjal M."/>
            <person name="Hansen N.F."/>
            <person name="Hayashizaki Y."/>
            <person name="Johnson-Hopson C."/>
            <person name="Hsuan V.W."/>
            <person name="Iida K."/>
            <person name="Karnes M."/>
            <person name="Khan S."/>
            <person name="Koesema E."/>
            <person name="Ishida J."/>
            <person name="Jiang P.X."/>
            <person name="Jones T."/>
            <person name="Kawai J."/>
            <person name="Kamiya A."/>
            <person name="Meyers C."/>
            <person name="Nakajima M."/>
            <person name="Narusaka M."/>
            <person name="Seki M."/>
            <person name="Sakurai T."/>
            <person name="Satou M."/>
            <person name="Tamse R."/>
            <person name="Vaysberg M."/>
            <person name="Wallender E.K."/>
            <person name="Wong C."/>
            <person name="Yamamura Y."/>
            <person name="Yuan S."/>
            <person name="Shinozaki K."/>
            <person name="Davis R.W."/>
            <person name="Theologis A."/>
            <person name="Ecker J.R."/>
        </authorList>
    </citation>
    <scope>NUCLEOTIDE SEQUENCE [LARGE SCALE MRNA]</scope>
    <source>
        <strain>cv. Columbia</strain>
    </source>
</reference>
<reference key="4">
    <citation type="submission" date="2006-07" db="EMBL/GenBank/DDBJ databases">
        <title>Large-scale analysis of RIKEN Arabidopsis full-length (RAFL) cDNAs.</title>
        <authorList>
            <person name="Totoki Y."/>
            <person name="Seki M."/>
            <person name="Ishida J."/>
            <person name="Nakajima M."/>
            <person name="Enju A."/>
            <person name="Kamiya A."/>
            <person name="Narusaka M."/>
            <person name="Shin-i T."/>
            <person name="Nakagawa M."/>
            <person name="Sakamoto N."/>
            <person name="Oishi K."/>
            <person name="Kohara Y."/>
            <person name="Kobayashi M."/>
            <person name="Toyoda A."/>
            <person name="Sakaki Y."/>
            <person name="Sakurai T."/>
            <person name="Iida K."/>
            <person name="Akiyama K."/>
            <person name="Satou M."/>
            <person name="Toyoda T."/>
            <person name="Konagaya A."/>
            <person name="Carninci P."/>
            <person name="Kawai J."/>
            <person name="Hayashizaki Y."/>
            <person name="Shinozaki K."/>
        </authorList>
    </citation>
    <scope>NUCLEOTIDE SEQUENCE [LARGE SCALE MRNA]</scope>
    <source>
        <strain>cv. Columbia</strain>
    </source>
</reference>
<reference key="5">
    <citation type="journal article" date="2009" name="DNA Res.">
        <title>Analysis of multiple occurrences of alternative splicing events in Arabidopsis thaliana using novel sequenced full-length cDNAs.</title>
        <authorList>
            <person name="Iida K."/>
            <person name="Fukami-Kobayashi K."/>
            <person name="Toyoda A."/>
            <person name="Sakaki Y."/>
            <person name="Kobayashi M."/>
            <person name="Seki M."/>
            <person name="Shinozaki K."/>
        </authorList>
    </citation>
    <scope>NUCLEOTIDE SEQUENCE [LARGE SCALE MRNA] OF 1-441</scope>
    <source>
        <strain>cv. Columbia</strain>
        <tissue>Rosette leaf</tissue>
    </source>
</reference>
<reference key="6">
    <citation type="submission" date="1998-08" db="EMBL/GenBank/DDBJ databases">
        <title>Characterization of the magnesium protoporphyrin chelatase chlD subunit from Arabidopsis thaliana cv. c24.</title>
        <authorList>
            <person name="Green J."/>
            <person name="Jensen P.E."/>
            <person name="Gibson L.C.D."/>
            <person name="Hunter C.N."/>
        </authorList>
    </citation>
    <scope>NUCLEOTIDE SEQUENCE [MRNA] OF 32-759</scope>
    <source>
        <strain>cv. C24</strain>
    </source>
</reference>
<reference key="7">
    <citation type="journal article" date="2009" name="PLoS ONE">
        <title>Integrating the genetic and physical maps of Arabidopsis thaliana: identification of mapped alleles of cloned essential (EMB) genes.</title>
        <authorList>
            <person name="Meinke D."/>
            <person name="Sweeney C."/>
            <person name="Muralla R."/>
        </authorList>
    </citation>
    <scope>FUNCTION</scope>
    <scope>DISRUPTION PHENOTYPE</scope>
</reference>
<reference key="8">
    <citation type="journal article" date="2012" name="Plant Mol. Biol.">
        <title>Roles of the different components of magnesium chelatase in abscisic acid signal transduction.</title>
        <authorList>
            <person name="Du S.Y."/>
            <person name="Zhang X.F."/>
            <person name="Lu Z."/>
            <person name="Xin Q."/>
            <person name="Wu Z."/>
            <person name="Jiang T."/>
            <person name="Lu Y."/>
            <person name="Wang X.F."/>
            <person name="Zhang D.P."/>
        </authorList>
    </citation>
    <scope>INTERACTION WITH CHLI1 AND CHLD</scope>
    <scope>FUNCTION</scope>
</reference>
<reference key="9">
    <citation type="journal article" date="2008" name="Photochem. Photobiol. Sci.">
        <title>Light signalling pathways regulating the Mg-chelatase branchpoint of chlorophyll synthesis during de-etiolation in Arabidopsis thaliana.</title>
        <authorList>
            <person name="Stephenson P.G."/>
            <person name="Terry M.J."/>
        </authorList>
    </citation>
    <scope>INDUCTION BY LIGHT</scope>
</reference>
<evidence type="ECO:0000255" key="1"/>
<evidence type="ECO:0000255" key="2">
    <source>
        <dbReference type="PROSITE-ProRule" id="PRU00219"/>
    </source>
</evidence>
<evidence type="ECO:0000256" key="3">
    <source>
        <dbReference type="SAM" id="MobiDB-lite"/>
    </source>
</evidence>
<evidence type="ECO:0000269" key="4">
    <source>
    </source>
</evidence>
<evidence type="ECO:0000269" key="5">
    <source>
    </source>
</evidence>
<evidence type="ECO:0000269" key="6">
    <source>
    </source>
</evidence>
<evidence type="ECO:0000305" key="7"/>
<evidence type="ECO:0000305" key="8">
    <source>
    </source>
</evidence>
<comment type="function">
    <text evidence="5 6">Involved in chlorophyll biosynthesis. Catalyzes the insertion of magnesium ion into protoporphyrin IX to yield Mg-protoporphyrin IX. The magnesium-chelatase is a complex of three subunits, CHLI, CHLD and CHLH. The reaction takes place in two steps, with an ATP-dependent activation followed by an ATP-dependent chelation step. Does not bind abscisic acid.</text>
</comment>
<comment type="catalytic activity">
    <reaction>
        <text>protoporphyrin IX + Mg(2+) + ATP + H2O = Mg-protoporphyrin IX + ADP + phosphate + 3 H(+)</text>
        <dbReference type="Rhea" id="RHEA:13961"/>
        <dbReference type="ChEBI" id="CHEBI:15377"/>
        <dbReference type="ChEBI" id="CHEBI:15378"/>
        <dbReference type="ChEBI" id="CHEBI:18420"/>
        <dbReference type="ChEBI" id="CHEBI:30616"/>
        <dbReference type="ChEBI" id="CHEBI:43474"/>
        <dbReference type="ChEBI" id="CHEBI:57306"/>
        <dbReference type="ChEBI" id="CHEBI:60492"/>
        <dbReference type="ChEBI" id="CHEBI:456216"/>
        <dbReference type="EC" id="6.6.1.1"/>
    </reaction>
</comment>
<comment type="pathway">
    <text>Porphyrin-containing compound metabolism; chlorophyll biosynthesis.</text>
</comment>
<comment type="subunit">
    <text evidence="6">The magnesium chelatase complex is a heterotrimer consisting of subunits CHLI, CHLD and CHLH. Interacts with CHLI1 and CHLH.</text>
</comment>
<comment type="subcellular location">
    <subcellularLocation>
        <location evidence="7">Plastid</location>
        <location evidence="7">Chloroplast</location>
    </subcellularLocation>
</comment>
<comment type="induction">
    <text evidence="4">Not regulated by light.</text>
</comment>
<comment type="disruption phenotype">
    <text evidence="5">Pigment defective seeds and embryos.</text>
</comment>
<comment type="miscellaneous">
    <text evidence="8">Over-expression of CHLD has no impact on abscisic acid sensitivity.</text>
</comment>
<comment type="similarity">
    <text evidence="7">Belongs to the Mg-chelatase subunits D/I family.</text>
</comment>
<comment type="sequence caution" evidence="7">
    <conflict type="erroneous gene model prediction">
        <sequence resource="EMBL-CDS" id="AAF22895"/>
    </conflict>
</comment>
<comment type="sequence caution" evidence="7">
    <conflict type="erroneous initiation">
        <sequence resource="EMBL-CDS" id="AAO00766"/>
    </conflict>
    <text>Extended N-terminus.</text>
</comment>
<proteinExistence type="evidence at protein level"/>
<sequence length="760" mass="83284">MAMTPVASSSPVSTCRLFRCNLLPDLLPKPLFLSLPKRNRIASCRFTVRASANATVESPNGVPASTSDTDTETDTTSYGRQFFPLAAVVGQEGIKTALLLGAVDREIGGIAISGRRGTAKTVMARGLHEILPPIEVVVGSISNADPACPDEWEDDLDERIEYNADNTIKTEIVKSPFIQIPLGVTEDRLIGSVDVEESVKRGTTVFQPGLLAEAHRGVLYVDEINLLDEGISNLLLNVLTDGVNIVEREGISFRHPCKPLLIATYNPEEGAVREHLLDRVAINLSADLPMSFEDRVAAVGIATQFQERCNEVFRMVNEETETAKTQIILAREYLKDVKISREQLKYLVLEAVRGGVQGHRAELYAARVAKCLAAIEGREKVTIDDLRKAVELVILPRSSLDETPPEQQNQPPPPPPPPQNSESGEEENEEEQEEEEEDESNEENENEQQQDQIPEEFIFDAEGGLVDEKLLFFAQQAQKRRGKAGRAKNVIFSEDRGRYIKPMLPKGPVKRLAVDATLRAAAPYQKLRREKDISGTRKVFVEKTDMRAKRMARKAGALVIFVVDASGSMALNRMQNAKGAALKLLAESYTSRDQVSIIPFRGDAAEVLLPPSRSIAMARNRLERLPCGGGSPLAHGLTTAVRVGLNAEKSGDVGRIMIVAITDGRANITLKRSTDPESIAPDAPRPTSKELKDEILEVAGKIYKAGMSLLVIDTENKFVSTGFAKEIARVAQGKYYYLPNASDAVISATTRDALSDLKNS</sequence>
<organism>
    <name type="scientific">Arabidopsis thaliana</name>
    <name type="common">Mouse-ear cress</name>
    <dbReference type="NCBI Taxonomy" id="3702"/>
    <lineage>
        <taxon>Eukaryota</taxon>
        <taxon>Viridiplantae</taxon>
        <taxon>Streptophyta</taxon>
        <taxon>Embryophyta</taxon>
        <taxon>Tracheophyta</taxon>
        <taxon>Spermatophyta</taxon>
        <taxon>Magnoliopsida</taxon>
        <taxon>eudicotyledons</taxon>
        <taxon>Gunneridae</taxon>
        <taxon>Pentapetalae</taxon>
        <taxon>rosids</taxon>
        <taxon>malvids</taxon>
        <taxon>Brassicales</taxon>
        <taxon>Brassicaceae</taxon>
        <taxon>Camelineae</taxon>
        <taxon>Arabidopsis</taxon>
    </lineage>
</organism>
<gene>
    <name type="primary">CHLD</name>
    <name type="synonym">ALB1</name>
    <name type="synonym">PDE166</name>
    <name type="ordered locus">At1g08520</name>
    <name type="ORF">T27G7.20</name>
</gene>
<name>CHLD_ARATH</name>
<accession>Q9SJE1</accession>
<accession>B9DFK0</accession>
<accession>Q8GUL4</accession>
<accession>Q8VZU7</accession>
<accession>Q93YN7</accession>
<accession>Q9SWY5</accession>
<protein>
    <recommendedName>
        <fullName>Magnesium-chelatase subunit ChlD, chloroplastic</fullName>
        <shortName>Mg-chelatase subunit D</shortName>
        <ecNumber>6.6.1.1</ecNumber>
    </recommendedName>
    <alternativeName>
        <fullName>Mg-protoporphyrin IX chelatase subunit ChlD</fullName>
    </alternativeName>
    <alternativeName>
        <fullName>Protein ALBINA 1</fullName>
    </alternativeName>
    <alternativeName>
        <fullName>Protein PIGMENT DEFECTIVE EMBRYO 166</fullName>
    </alternativeName>
</protein>
<keyword id="KW-0067">ATP-binding</keyword>
<keyword id="KW-0149">Chlorophyll biosynthesis</keyword>
<keyword id="KW-0150">Chloroplast</keyword>
<keyword id="KW-0436">Ligase</keyword>
<keyword id="KW-0547">Nucleotide-binding</keyword>
<keyword id="KW-0602">Photosynthesis</keyword>
<keyword id="KW-0934">Plastid</keyword>
<keyword id="KW-1185">Reference proteome</keyword>
<keyword id="KW-0809">Transit peptide</keyword>